<reference key="1">
    <citation type="journal article" date="2009" name="PLoS ONE">
        <title>The complete genome of Teredinibacter turnerae T7901: an intracellular endosymbiont of marine wood-boring bivalves (shipworms).</title>
        <authorList>
            <person name="Yang J.C."/>
            <person name="Madupu R."/>
            <person name="Durkin A.S."/>
            <person name="Ekborg N.A."/>
            <person name="Pedamallu C.S."/>
            <person name="Hostetler J.B."/>
            <person name="Radune D."/>
            <person name="Toms B.S."/>
            <person name="Henrissat B."/>
            <person name="Coutinho P.M."/>
            <person name="Schwarz S."/>
            <person name="Field L."/>
            <person name="Trindade-Silva A.E."/>
            <person name="Soares C.A.G."/>
            <person name="Elshahawi S."/>
            <person name="Hanora A."/>
            <person name="Schmidt E.W."/>
            <person name="Haygood M.G."/>
            <person name="Posfai J."/>
            <person name="Benner J."/>
            <person name="Madinger C."/>
            <person name="Nove J."/>
            <person name="Anton B."/>
            <person name="Chaudhary K."/>
            <person name="Foster J."/>
            <person name="Holman A."/>
            <person name="Kumar S."/>
            <person name="Lessard P.A."/>
            <person name="Luyten Y.A."/>
            <person name="Slatko B."/>
            <person name="Wood N."/>
            <person name="Wu B."/>
            <person name="Teplitski M."/>
            <person name="Mougous J.D."/>
            <person name="Ward N."/>
            <person name="Eisen J.A."/>
            <person name="Badger J.H."/>
            <person name="Distel D.L."/>
        </authorList>
    </citation>
    <scope>NUCLEOTIDE SEQUENCE [LARGE SCALE GENOMIC DNA]</scope>
    <source>
        <strain>ATCC 39867 / T7901</strain>
    </source>
</reference>
<dbReference type="EC" id="2.7.4.6" evidence="1"/>
<dbReference type="EMBL" id="CP001614">
    <property type="protein sequence ID" value="ACR12889.1"/>
    <property type="molecule type" value="Genomic_DNA"/>
</dbReference>
<dbReference type="RefSeq" id="WP_015819002.1">
    <property type="nucleotide sequence ID" value="NC_012997.1"/>
</dbReference>
<dbReference type="SMR" id="C5BLW3"/>
<dbReference type="STRING" id="377629.TERTU_2637"/>
<dbReference type="KEGG" id="ttu:TERTU_2637"/>
<dbReference type="eggNOG" id="COG0105">
    <property type="taxonomic scope" value="Bacteria"/>
</dbReference>
<dbReference type="HOGENOM" id="CLU_060216_8_1_6"/>
<dbReference type="OrthoDB" id="9801161at2"/>
<dbReference type="Proteomes" id="UP000009080">
    <property type="component" value="Chromosome"/>
</dbReference>
<dbReference type="GO" id="GO:0005737">
    <property type="term" value="C:cytoplasm"/>
    <property type="evidence" value="ECO:0007669"/>
    <property type="project" value="UniProtKB-SubCell"/>
</dbReference>
<dbReference type="GO" id="GO:0005524">
    <property type="term" value="F:ATP binding"/>
    <property type="evidence" value="ECO:0007669"/>
    <property type="project" value="UniProtKB-UniRule"/>
</dbReference>
<dbReference type="GO" id="GO:0046872">
    <property type="term" value="F:metal ion binding"/>
    <property type="evidence" value="ECO:0007669"/>
    <property type="project" value="UniProtKB-KW"/>
</dbReference>
<dbReference type="GO" id="GO:0004550">
    <property type="term" value="F:nucleoside diphosphate kinase activity"/>
    <property type="evidence" value="ECO:0007669"/>
    <property type="project" value="UniProtKB-UniRule"/>
</dbReference>
<dbReference type="GO" id="GO:0006241">
    <property type="term" value="P:CTP biosynthetic process"/>
    <property type="evidence" value="ECO:0007669"/>
    <property type="project" value="UniProtKB-UniRule"/>
</dbReference>
<dbReference type="GO" id="GO:0006183">
    <property type="term" value="P:GTP biosynthetic process"/>
    <property type="evidence" value="ECO:0007669"/>
    <property type="project" value="UniProtKB-UniRule"/>
</dbReference>
<dbReference type="GO" id="GO:0006228">
    <property type="term" value="P:UTP biosynthetic process"/>
    <property type="evidence" value="ECO:0007669"/>
    <property type="project" value="UniProtKB-UniRule"/>
</dbReference>
<dbReference type="CDD" id="cd04413">
    <property type="entry name" value="NDPk_I"/>
    <property type="match status" value="1"/>
</dbReference>
<dbReference type="FunFam" id="3.30.70.141:FF:000001">
    <property type="entry name" value="Nucleoside diphosphate kinase"/>
    <property type="match status" value="1"/>
</dbReference>
<dbReference type="Gene3D" id="3.30.70.141">
    <property type="entry name" value="Nucleoside diphosphate kinase-like domain"/>
    <property type="match status" value="1"/>
</dbReference>
<dbReference type="HAMAP" id="MF_00451">
    <property type="entry name" value="NDP_kinase"/>
    <property type="match status" value="1"/>
</dbReference>
<dbReference type="InterPro" id="IPR034907">
    <property type="entry name" value="NDK-like_dom"/>
</dbReference>
<dbReference type="InterPro" id="IPR036850">
    <property type="entry name" value="NDK-like_dom_sf"/>
</dbReference>
<dbReference type="InterPro" id="IPR001564">
    <property type="entry name" value="Nucleoside_diP_kinase"/>
</dbReference>
<dbReference type="NCBIfam" id="NF001908">
    <property type="entry name" value="PRK00668.1"/>
    <property type="match status" value="1"/>
</dbReference>
<dbReference type="PANTHER" id="PTHR11349">
    <property type="entry name" value="NUCLEOSIDE DIPHOSPHATE KINASE"/>
    <property type="match status" value="1"/>
</dbReference>
<dbReference type="Pfam" id="PF00334">
    <property type="entry name" value="NDK"/>
    <property type="match status" value="1"/>
</dbReference>
<dbReference type="PRINTS" id="PR01243">
    <property type="entry name" value="NUCDPKINASE"/>
</dbReference>
<dbReference type="SMART" id="SM00562">
    <property type="entry name" value="NDK"/>
    <property type="match status" value="1"/>
</dbReference>
<dbReference type="SUPFAM" id="SSF54919">
    <property type="entry name" value="Nucleoside diphosphate kinase, NDK"/>
    <property type="match status" value="1"/>
</dbReference>
<dbReference type="PROSITE" id="PS51374">
    <property type="entry name" value="NDPK_LIKE"/>
    <property type="match status" value="1"/>
</dbReference>
<evidence type="ECO:0000255" key="1">
    <source>
        <dbReference type="HAMAP-Rule" id="MF_00451"/>
    </source>
</evidence>
<gene>
    <name evidence="1" type="primary">ndk</name>
    <name type="ordered locus">TERTU_2637</name>
</gene>
<comment type="function">
    <text evidence="1">Major role in the synthesis of nucleoside triphosphates other than ATP. The ATP gamma phosphate is transferred to the NDP beta phosphate via a ping-pong mechanism, using a phosphorylated active-site intermediate.</text>
</comment>
<comment type="catalytic activity">
    <reaction evidence="1">
        <text>a 2'-deoxyribonucleoside 5'-diphosphate + ATP = a 2'-deoxyribonucleoside 5'-triphosphate + ADP</text>
        <dbReference type="Rhea" id="RHEA:44640"/>
        <dbReference type="ChEBI" id="CHEBI:30616"/>
        <dbReference type="ChEBI" id="CHEBI:61560"/>
        <dbReference type="ChEBI" id="CHEBI:73316"/>
        <dbReference type="ChEBI" id="CHEBI:456216"/>
        <dbReference type="EC" id="2.7.4.6"/>
    </reaction>
</comment>
<comment type="catalytic activity">
    <reaction evidence="1">
        <text>a ribonucleoside 5'-diphosphate + ATP = a ribonucleoside 5'-triphosphate + ADP</text>
        <dbReference type="Rhea" id="RHEA:18113"/>
        <dbReference type="ChEBI" id="CHEBI:30616"/>
        <dbReference type="ChEBI" id="CHEBI:57930"/>
        <dbReference type="ChEBI" id="CHEBI:61557"/>
        <dbReference type="ChEBI" id="CHEBI:456216"/>
        <dbReference type="EC" id="2.7.4.6"/>
    </reaction>
</comment>
<comment type="cofactor">
    <cofactor evidence="1">
        <name>Mg(2+)</name>
        <dbReference type="ChEBI" id="CHEBI:18420"/>
    </cofactor>
</comment>
<comment type="subunit">
    <text evidence="1">Homotetramer.</text>
</comment>
<comment type="subcellular location">
    <subcellularLocation>
        <location evidence="1">Cytoplasm</location>
    </subcellularLocation>
</comment>
<comment type="similarity">
    <text evidence="1">Belongs to the NDK family.</text>
</comment>
<name>NDK_TERTT</name>
<keyword id="KW-0067">ATP-binding</keyword>
<keyword id="KW-0963">Cytoplasm</keyword>
<keyword id="KW-0418">Kinase</keyword>
<keyword id="KW-0460">Magnesium</keyword>
<keyword id="KW-0479">Metal-binding</keyword>
<keyword id="KW-0546">Nucleotide metabolism</keyword>
<keyword id="KW-0547">Nucleotide-binding</keyword>
<keyword id="KW-0597">Phosphoprotein</keyword>
<keyword id="KW-1185">Reference proteome</keyword>
<keyword id="KW-0808">Transferase</keyword>
<sequence length="141" mass="15419">MAIEKTLSIVKPNAVKKNVIGDIYSRFEKAGLKIVAAKMTQLDDDRAGGFYEEHKARPFFGELVEFMTSGPVLIQVLEGENAVALNREIMGATNPENAAEGTIRKDFADSLSENAVHGSDSTESAAREIAYFFDAAEIFSR</sequence>
<feature type="chain" id="PRO_1000206229" description="Nucleoside diphosphate kinase">
    <location>
        <begin position="1"/>
        <end position="141"/>
    </location>
</feature>
<feature type="active site" description="Pros-phosphohistidine intermediate" evidence="1">
    <location>
        <position position="117"/>
    </location>
</feature>
<feature type="binding site" evidence="1">
    <location>
        <position position="11"/>
    </location>
    <ligand>
        <name>ATP</name>
        <dbReference type="ChEBI" id="CHEBI:30616"/>
    </ligand>
</feature>
<feature type="binding site" evidence="1">
    <location>
        <position position="59"/>
    </location>
    <ligand>
        <name>ATP</name>
        <dbReference type="ChEBI" id="CHEBI:30616"/>
    </ligand>
</feature>
<feature type="binding site" evidence="1">
    <location>
        <position position="87"/>
    </location>
    <ligand>
        <name>ATP</name>
        <dbReference type="ChEBI" id="CHEBI:30616"/>
    </ligand>
</feature>
<feature type="binding site" evidence="1">
    <location>
        <position position="93"/>
    </location>
    <ligand>
        <name>ATP</name>
        <dbReference type="ChEBI" id="CHEBI:30616"/>
    </ligand>
</feature>
<feature type="binding site" evidence="1">
    <location>
        <position position="104"/>
    </location>
    <ligand>
        <name>ATP</name>
        <dbReference type="ChEBI" id="CHEBI:30616"/>
    </ligand>
</feature>
<feature type="binding site" evidence="1">
    <location>
        <position position="114"/>
    </location>
    <ligand>
        <name>ATP</name>
        <dbReference type="ChEBI" id="CHEBI:30616"/>
    </ligand>
</feature>
<accession>C5BLW3</accession>
<organism>
    <name type="scientific">Teredinibacter turnerae (strain ATCC 39867 / T7901)</name>
    <dbReference type="NCBI Taxonomy" id="377629"/>
    <lineage>
        <taxon>Bacteria</taxon>
        <taxon>Pseudomonadati</taxon>
        <taxon>Pseudomonadota</taxon>
        <taxon>Gammaproteobacteria</taxon>
        <taxon>Cellvibrionales</taxon>
        <taxon>Cellvibrionaceae</taxon>
        <taxon>Teredinibacter</taxon>
    </lineage>
</organism>
<protein>
    <recommendedName>
        <fullName evidence="1">Nucleoside diphosphate kinase</fullName>
        <shortName evidence="1">NDK</shortName>
        <shortName evidence="1">NDP kinase</shortName>
        <ecNumber evidence="1">2.7.4.6</ecNumber>
    </recommendedName>
    <alternativeName>
        <fullName evidence="1">Nucleoside-2-P kinase</fullName>
    </alternativeName>
</protein>
<proteinExistence type="inferred from homology"/>